<reference key="1">
    <citation type="submission" date="2007-11" db="EMBL/GenBank/DDBJ databases">
        <authorList>
            <consortium name="The Salmonella enterica serovar Paratyphi B Genome Sequencing Project"/>
            <person name="McClelland M."/>
            <person name="Sanderson E.K."/>
            <person name="Porwollik S."/>
            <person name="Spieth J."/>
            <person name="Clifton W.S."/>
            <person name="Fulton R."/>
            <person name="Cordes M."/>
            <person name="Wollam A."/>
            <person name="Shah N."/>
            <person name="Pepin K."/>
            <person name="Bhonagiri V."/>
            <person name="Nash W."/>
            <person name="Johnson M."/>
            <person name="Thiruvilangam P."/>
            <person name="Wilson R."/>
        </authorList>
    </citation>
    <scope>NUCLEOTIDE SEQUENCE [LARGE SCALE GENOMIC DNA]</scope>
    <source>
        <strain>ATCC BAA-1250 / SPB7</strain>
    </source>
</reference>
<name>SUCC_SALPB</name>
<evidence type="ECO:0000255" key="1">
    <source>
        <dbReference type="HAMAP-Rule" id="MF_00558"/>
    </source>
</evidence>
<accession>A9MTQ2</accession>
<proteinExistence type="inferred from homology"/>
<protein>
    <recommendedName>
        <fullName evidence="1">Succinate--CoA ligase [ADP-forming] subunit beta</fullName>
        <ecNumber evidence="1">6.2.1.5</ecNumber>
    </recommendedName>
    <alternativeName>
        <fullName evidence="1">Succinyl-CoA synthetase subunit beta</fullName>
        <shortName evidence="1">SCS-beta</shortName>
    </alternativeName>
</protein>
<dbReference type="EC" id="6.2.1.5" evidence="1"/>
<dbReference type="EMBL" id="CP000886">
    <property type="protein sequence ID" value="ABX68168.1"/>
    <property type="molecule type" value="Genomic_DNA"/>
</dbReference>
<dbReference type="RefSeq" id="WP_001048590.1">
    <property type="nucleotide sequence ID" value="NC_010102.1"/>
</dbReference>
<dbReference type="SMR" id="A9MTQ2"/>
<dbReference type="KEGG" id="spq:SPAB_02796"/>
<dbReference type="PATRIC" id="fig|1016998.12.peg.2641"/>
<dbReference type="HOGENOM" id="CLU_037430_4_0_6"/>
<dbReference type="BioCyc" id="SENT1016998:SPAB_RS11360-MONOMER"/>
<dbReference type="UniPathway" id="UPA00223">
    <property type="reaction ID" value="UER00999"/>
</dbReference>
<dbReference type="Proteomes" id="UP000008556">
    <property type="component" value="Chromosome"/>
</dbReference>
<dbReference type="GO" id="GO:0005829">
    <property type="term" value="C:cytosol"/>
    <property type="evidence" value="ECO:0007669"/>
    <property type="project" value="TreeGrafter"/>
</dbReference>
<dbReference type="GO" id="GO:0042709">
    <property type="term" value="C:succinate-CoA ligase complex"/>
    <property type="evidence" value="ECO:0007669"/>
    <property type="project" value="TreeGrafter"/>
</dbReference>
<dbReference type="GO" id="GO:0005524">
    <property type="term" value="F:ATP binding"/>
    <property type="evidence" value="ECO:0007669"/>
    <property type="project" value="UniProtKB-UniRule"/>
</dbReference>
<dbReference type="GO" id="GO:0000287">
    <property type="term" value="F:magnesium ion binding"/>
    <property type="evidence" value="ECO:0007669"/>
    <property type="project" value="UniProtKB-UniRule"/>
</dbReference>
<dbReference type="GO" id="GO:0004775">
    <property type="term" value="F:succinate-CoA ligase (ADP-forming) activity"/>
    <property type="evidence" value="ECO:0007669"/>
    <property type="project" value="UniProtKB-UniRule"/>
</dbReference>
<dbReference type="GO" id="GO:0004776">
    <property type="term" value="F:succinate-CoA ligase (GDP-forming) activity"/>
    <property type="evidence" value="ECO:0007669"/>
    <property type="project" value="RHEA"/>
</dbReference>
<dbReference type="GO" id="GO:0006104">
    <property type="term" value="P:succinyl-CoA metabolic process"/>
    <property type="evidence" value="ECO:0007669"/>
    <property type="project" value="TreeGrafter"/>
</dbReference>
<dbReference type="GO" id="GO:0006099">
    <property type="term" value="P:tricarboxylic acid cycle"/>
    <property type="evidence" value="ECO:0007669"/>
    <property type="project" value="UniProtKB-UniRule"/>
</dbReference>
<dbReference type="FunFam" id="3.30.1490.20:FF:000002">
    <property type="entry name" value="Succinate--CoA ligase [ADP-forming] subunit beta"/>
    <property type="match status" value="1"/>
</dbReference>
<dbReference type="FunFam" id="3.30.470.20:FF:000002">
    <property type="entry name" value="Succinate--CoA ligase [ADP-forming] subunit beta"/>
    <property type="match status" value="1"/>
</dbReference>
<dbReference type="FunFam" id="3.40.50.261:FF:000001">
    <property type="entry name" value="Succinate--CoA ligase [ADP-forming] subunit beta"/>
    <property type="match status" value="1"/>
</dbReference>
<dbReference type="Gene3D" id="3.30.1490.20">
    <property type="entry name" value="ATP-grasp fold, A domain"/>
    <property type="match status" value="1"/>
</dbReference>
<dbReference type="Gene3D" id="3.30.470.20">
    <property type="entry name" value="ATP-grasp fold, B domain"/>
    <property type="match status" value="1"/>
</dbReference>
<dbReference type="Gene3D" id="3.40.50.261">
    <property type="entry name" value="Succinyl-CoA synthetase domains"/>
    <property type="match status" value="1"/>
</dbReference>
<dbReference type="HAMAP" id="MF_00558">
    <property type="entry name" value="Succ_CoA_beta"/>
    <property type="match status" value="1"/>
</dbReference>
<dbReference type="InterPro" id="IPR011761">
    <property type="entry name" value="ATP-grasp"/>
</dbReference>
<dbReference type="InterPro" id="IPR013650">
    <property type="entry name" value="ATP-grasp_succ-CoA_synth-type"/>
</dbReference>
<dbReference type="InterPro" id="IPR013815">
    <property type="entry name" value="ATP_grasp_subdomain_1"/>
</dbReference>
<dbReference type="InterPro" id="IPR017866">
    <property type="entry name" value="Succ-CoA_synthase_bsu_CS"/>
</dbReference>
<dbReference type="InterPro" id="IPR005811">
    <property type="entry name" value="SUCC_ACL_C"/>
</dbReference>
<dbReference type="InterPro" id="IPR005809">
    <property type="entry name" value="Succ_CoA_ligase-like_bsu"/>
</dbReference>
<dbReference type="InterPro" id="IPR016102">
    <property type="entry name" value="Succinyl-CoA_synth-like"/>
</dbReference>
<dbReference type="NCBIfam" id="NF001913">
    <property type="entry name" value="PRK00696.1"/>
    <property type="match status" value="1"/>
</dbReference>
<dbReference type="NCBIfam" id="TIGR01016">
    <property type="entry name" value="sucCoAbeta"/>
    <property type="match status" value="1"/>
</dbReference>
<dbReference type="PANTHER" id="PTHR11815:SF10">
    <property type="entry name" value="SUCCINATE--COA LIGASE [GDP-FORMING] SUBUNIT BETA, MITOCHONDRIAL"/>
    <property type="match status" value="1"/>
</dbReference>
<dbReference type="PANTHER" id="PTHR11815">
    <property type="entry name" value="SUCCINYL-COA SYNTHETASE BETA CHAIN"/>
    <property type="match status" value="1"/>
</dbReference>
<dbReference type="Pfam" id="PF08442">
    <property type="entry name" value="ATP-grasp_2"/>
    <property type="match status" value="1"/>
</dbReference>
<dbReference type="Pfam" id="PF00549">
    <property type="entry name" value="Ligase_CoA"/>
    <property type="match status" value="1"/>
</dbReference>
<dbReference type="PIRSF" id="PIRSF001554">
    <property type="entry name" value="SucCS_beta"/>
    <property type="match status" value="1"/>
</dbReference>
<dbReference type="SUPFAM" id="SSF56059">
    <property type="entry name" value="Glutathione synthetase ATP-binding domain-like"/>
    <property type="match status" value="1"/>
</dbReference>
<dbReference type="SUPFAM" id="SSF52210">
    <property type="entry name" value="Succinyl-CoA synthetase domains"/>
    <property type="match status" value="1"/>
</dbReference>
<dbReference type="PROSITE" id="PS50975">
    <property type="entry name" value="ATP_GRASP"/>
    <property type="match status" value="1"/>
</dbReference>
<dbReference type="PROSITE" id="PS01217">
    <property type="entry name" value="SUCCINYL_COA_LIG_3"/>
    <property type="match status" value="1"/>
</dbReference>
<gene>
    <name evidence="1" type="primary">sucC</name>
    <name type="ordered locus">SPAB_02796</name>
</gene>
<feature type="chain" id="PRO_1000082213" description="Succinate--CoA ligase [ADP-forming] subunit beta">
    <location>
        <begin position="1"/>
        <end position="388"/>
    </location>
</feature>
<feature type="domain" description="ATP-grasp" evidence="1">
    <location>
        <begin position="9"/>
        <end position="244"/>
    </location>
</feature>
<feature type="binding site" evidence="1">
    <location>
        <position position="46"/>
    </location>
    <ligand>
        <name>ATP</name>
        <dbReference type="ChEBI" id="CHEBI:30616"/>
    </ligand>
</feature>
<feature type="binding site" evidence="1">
    <location>
        <begin position="53"/>
        <end position="55"/>
    </location>
    <ligand>
        <name>ATP</name>
        <dbReference type="ChEBI" id="CHEBI:30616"/>
    </ligand>
</feature>
<feature type="binding site" evidence="1">
    <location>
        <position position="99"/>
    </location>
    <ligand>
        <name>ATP</name>
        <dbReference type="ChEBI" id="CHEBI:30616"/>
    </ligand>
</feature>
<feature type="binding site" evidence="1">
    <location>
        <position position="102"/>
    </location>
    <ligand>
        <name>ATP</name>
        <dbReference type="ChEBI" id="CHEBI:30616"/>
    </ligand>
</feature>
<feature type="binding site" evidence="1">
    <location>
        <position position="107"/>
    </location>
    <ligand>
        <name>ATP</name>
        <dbReference type="ChEBI" id="CHEBI:30616"/>
    </ligand>
</feature>
<feature type="binding site" evidence="1">
    <location>
        <position position="199"/>
    </location>
    <ligand>
        <name>Mg(2+)</name>
        <dbReference type="ChEBI" id="CHEBI:18420"/>
    </ligand>
</feature>
<feature type="binding site" evidence="1">
    <location>
        <position position="213"/>
    </location>
    <ligand>
        <name>Mg(2+)</name>
        <dbReference type="ChEBI" id="CHEBI:18420"/>
    </ligand>
</feature>
<feature type="binding site" evidence="1">
    <location>
        <position position="264"/>
    </location>
    <ligand>
        <name>substrate</name>
        <note>ligand shared with subunit alpha</note>
    </ligand>
</feature>
<feature type="binding site" evidence="1">
    <location>
        <begin position="321"/>
        <end position="323"/>
    </location>
    <ligand>
        <name>substrate</name>
        <note>ligand shared with subunit alpha</note>
    </ligand>
</feature>
<keyword id="KW-0067">ATP-binding</keyword>
<keyword id="KW-0436">Ligase</keyword>
<keyword id="KW-0460">Magnesium</keyword>
<keyword id="KW-0479">Metal-binding</keyword>
<keyword id="KW-0547">Nucleotide-binding</keyword>
<keyword id="KW-0816">Tricarboxylic acid cycle</keyword>
<comment type="function">
    <text evidence="1">Succinyl-CoA synthetase functions in the citric acid cycle (TCA), coupling the hydrolysis of succinyl-CoA to the synthesis of either ATP or GTP and thus represents the only step of substrate-level phosphorylation in the TCA. The beta subunit provides nucleotide specificity of the enzyme and binds the substrate succinate, while the binding sites for coenzyme A and phosphate are found in the alpha subunit.</text>
</comment>
<comment type="catalytic activity">
    <reaction evidence="1">
        <text>succinate + ATP + CoA = succinyl-CoA + ADP + phosphate</text>
        <dbReference type="Rhea" id="RHEA:17661"/>
        <dbReference type="ChEBI" id="CHEBI:30031"/>
        <dbReference type="ChEBI" id="CHEBI:30616"/>
        <dbReference type="ChEBI" id="CHEBI:43474"/>
        <dbReference type="ChEBI" id="CHEBI:57287"/>
        <dbReference type="ChEBI" id="CHEBI:57292"/>
        <dbReference type="ChEBI" id="CHEBI:456216"/>
        <dbReference type="EC" id="6.2.1.5"/>
    </reaction>
    <physiologicalReaction direction="right-to-left" evidence="1">
        <dbReference type="Rhea" id="RHEA:17663"/>
    </physiologicalReaction>
</comment>
<comment type="catalytic activity">
    <reaction evidence="1">
        <text>GTP + succinate + CoA = succinyl-CoA + GDP + phosphate</text>
        <dbReference type="Rhea" id="RHEA:22120"/>
        <dbReference type="ChEBI" id="CHEBI:30031"/>
        <dbReference type="ChEBI" id="CHEBI:37565"/>
        <dbReference type="ChEBI" id="CHEBI:43474"/>
        <dbReference type="ChEBI" id="CHEBI:57287"/>
        <dbReference type="ChEBI" id="CHEBI:57292"/>
        <dbReference type="ChEBI" id="CHEBI:58189"/>
    </reaction>
    <physiologicalReaction direction="right-to-left" evidence="1">
        <dbReference type="Rhea" id="RHEA:22122"/>
    </physiologicalReaction>
</comment>
<comment type="cofactor">
    <cofactor evidence="1">
        <name>Mg(2+)</name>
        <dbReference type="ChEBI" id="CHEBI:18420"/>
    </cofactor>
    <text evidence="1">Binds 1 Mg(2+) ion per subunit.</text>
</comment>
<comment type="pathway">
    <text evidence="1">Carbohydrate metabolism; tricarboxylic acid cycle; succinate from succinyl-CoA (ligase route): step 1/1.</text>
</comment>
<comment type="subunit">
    <text evidence="1">Heterotetramer of two alpha and two beta subunits.</text>
</comment>
<comment type="similarity">
    <text evidence="1">Belongs to the succinate/malate CoA ligase beta subunit family.</text>
</comment>
<sequence length="388" mass="41481">MNLHEYQAKQLFARYGLPAPVGYACTTPREAEEAASKIGAGPWVVKCQVHAGGRGKAGGVKVVKSKEEIRAFAENWLGKRLVTYQTDANGQPVNQILVEAATDIGKELYLGAVVDRSSRRVVFMASTEGGVEIEKVAEETPHLIHKVALDPLTGPMPYQGRELAFKLGLEGKLVQQFTKIFMGLATIFLERDLALIEINPLVITKQGDLICLDGKLGADGNALFRQPDLREMRDQSQEDPREAQAAQWELNYVALDGNIGCMVNGAGLAMGTMDIVKLHGGEPANFLDVGGGATKERVTEAFKIILSDDNVKAVLVNIFGGIVRCDLIADGIIGAVEEVGVNVPVVVRLEGNNAELGAKKLADSGLNIIAAKSLTDAAQQVVAAVEGK</sequence>
<organism>
    <name type="scientific">Salmonella paratyphi B (strain ATCC BAA-1250 / SPB7)</name>
    <dbReference type="NCBI Taxonomy" id="1016998"/>
    <lineage>
        <taxon>Bacteria</taxon>
        <taxon>Pseudomonadati</taxon>
        <taxon>Pseudomonadota</taxon>
        <taxon>Gammaproteobacteria</taxon>
        <taxon>Enterobacterales</taxon>
        <taxon>Enterobacteriaceae</taxon>
        <taxon>Salmonella</taxon>
    </lineage>
</organism>